<name>TAT_SIVM2</name>
<dbReference type="EMBL" id="M19499">
    <property type="protein sequence ID" value="AAB59910.1"/>
    <property type="molecule type" value="Genomic_RNA"/>
</dbReference>
<dbReference type="EMBL" id="X06879">
    <property type="status" value="NOT_ANNOTATED_CDS"/>
    <property type="molecule type" value="Genomic_DNA"/>
</dbReference>
<dbReference type="Proteomes" id="UP000258290">
    <property type="component" value="Segment"/>
</dbReference>
<dbReference type="GO" id="GO:0044196">
    <property type="term" value="C:host cell nucleolus"/>
    <property type="evidence" value="ECO:0007669"/>
    <property type="project" value="UniProtKB-SubCell"/>
</dbReference>
<dbReference type="GO" id="GO:0003723">
    <property type="term" value="F:RNA binding"/>
    <property type="evidence" value="ECO:0007669"/>
    <property type="project" value="UniProtKB-KW"/>
</dbReference>
<dbReference type="GO" id="GO:0001070">
    <property type="term" value="F:RNA-binding transcription regulator activity"/>
    <property type="evidence" value="ECO:0007669"/>
    <property type="project" value="InterPro"/>
</dbReference>
<dbReference type="GO" id="GO:0050434">
    <property type="term" value="P:positive regulation of viral transcription"/>
    <property type="evidence" value="ECO:0007669"/>
    <property type="project" value="InterPro"/>
</dbReference>
<dbReference type="Gene3D" id="4.10.20.10">
    <property type="entry name" value="Tat domain"/>
    <property type="match status" value="1"/>
</dbReference>
<dbReference type="InterPro" id="IPR001831">
    <property type="entry name" value="IV_Tat"/>
</dbReference>
<dbReference type="InterPro" id="IPR036963">
    <property type="entry name" value="Tat_dom_sf"/>
</dbReference>
<dbReference type="Pfam" id="PF00539">
    <property type="entry name" value="Tat"/>
    <property type="match status" value="1"/>
</dbReference>
<dbReference type="PRINTS" id="PR00055">
    <property type="entry name" value="HIVTATDOMAIN"/>
</dbReference>
<comment type="function">
    <text evidence="2">Transcriptional activator that increases RNA Pol II processivity, thereby increasing the level of full-length viral transcripts. Recognizes a hairpin structure at the 5'-LTR of the nascent viral mRNAs referred to as the transactivation responsive RNA element (TAR) and recruits the cyclin T1-CDK9 complex (P-TEFb complex) that will in turn hyperphosphorylate the RNA polymerase II to allow efficient elongation. The CDK9 component of P-TEFb and other Tat-activated kinases hyperphosphorylate the C-terminus of RNA Pol II that becomes stabilized and much more processive.</text>
</comment>
<comment type="function">
    <text evidence="1">Extracellular circulating Tat can be endocytosed by surrounding uninfected cells via the binding to several surface receptors. Endosomal low pH allows Tat to cross the endosome membrane to enter the cytosol and eventually further translocate into the nucleus, thereby inducing severe cell dysfunctions ranging from cell activation to cell death. Through (By similarity).</text>
</comment>
<comment type="subunit">
    <text evidence="1">Interacts with host CCNT1. Associates with the P-TEFb complex composed at least of Tat, P-TEFb (CDK9 and CCNT1), TAR RNA, RNA Pol II. Interacts with CCNT2; the resulting complex is unable to bind to TAR RNA (By similarity).</text>
</comment>
<comment type="subcellular location">
    <subcellularLocation>
        <location evidence="1">Host nucleus</location>
        <location evidence="1">Host nucleolus</location>
    </subcellularLocation>
</comment>
<comment type="similarity">
    <text evidence="5">Belongs to the lentiviruses Tat family.</text>
</comment>
<protein>
    <recommendedName>
        <fullName>Protein Tat</fullName>
    </recommendedName>
    <alternativeName>
        <fullName>Transactivating regulatory protein</fullName>
    </alternativeName>
</protein>
<keyword id="KW-0010">Activator</keyword>
<keyword id="KW-1048">Host nucleus</keyword>
<keyword id="KW-0945">Host-virus interaction</keyword>
<keyword id="KW-0694">RNA-binding</keyword>
<keyword id="KW-0804">Transcription</keyword>
<keyword id="KW-0805">Transcription regulation</keyword>
<gene>
    <name type="primary">tat</name>
</gene>
<evidence type="ECO:0000250" key="1"/>
<evidence type="ECO:0000250" key="2">
    <source>
        <dbReference type="UniProtKB" id="P04608"/>
    </source>
</evidence>
<evidence type="ECO:0000255" key="3"/>
<evidence type="ECO:0000256" key="4">
    <source>
        <dbReference type="SAM" id="MobiDB-lite"/>
    </source>
</evidence>
<evidence type="ECO:0000305" key="5"/>
<sequence>METPLREQENSLESSNERSSCILEADATTPESANLGEEILSQLYRPLEACYNTCYCKKCCYHCQFCFLKKGLGICYEQSRKRRRTPKKAKANTSSASNNRLIPNRTRHCQPEKAKKETVEKAVATAPGLGR</sequence>
<proteinExistence type="inferred from homology"/>
<feature type="chain" id="PRO_0000085384" description="Protein Tat">
    <location>
        <begin position="1"/>
        <end position="131"/>
    </location>
</feature>
<feature type="region of interest" description="Cysteine-rich" evidence="1">
    <location>
        <begin position="50"/>
        <end position="66"/>
    </location>
</feature>
<feature type="region of interest" description="Core" evidence="1">
    <location>
        <begin position="67"/>
        <end position="77"/>
    </location>
</feature>
<feature type="region of interest" description="Disordered" evidence="4">
    <location>
        <begin position="80"/>
        <end position="131"/>
    </location>
</feature>
<feature type="short sequence motif" description="Nuclear localization signal, and RNA-binding (TAR)" evidence="3">
    <location>
        <begin position="78"/>
        <end position="84"/>
    </location>
</feature>
<feature type="compositionally biased region" description="Basic residues" evidence="4">
    <location>
        <begin position="80"/>
        <end position="90"/>
    </location>
</feature>
<feature type="compositionally biased region" description="Polar residues" evidence="4">
    <location>
        <begin position="92"/>
        <end position="101"/>
    </location>
</feature>
<feature type="compositionally biased region" description="Basic and acidic residues" evidence="4">
    <location>
        <begin position="109"/>
        <end position="120"/>
    </location>
</feature>
<feature type="compositionally biased region" description="Low complexity" evidence="4">
    <location>
        <begin position="121"/>
        <end position="131"/>
    </location>
</feature>
<accession>P05910</accession>
<accession>P05912</accession>
<organismHost>
    <name type="scientific">Cercopithecidae</name>
    <name type="common">Old World monkeys</name>
    <dbReference type="NCBI Taxonomy" id="9527"/>
</organismHost>
<reference key="1">
    <citation type="journal article" date="1988" name="Nature">
        <title>Comparison of simian immunodeficiency virus isolates.</title>
        <authorList>
            <person name="Kestler H.W."/>
            <person name="Li Y."/>
            <person name="Naidu Y.M."/>
            <person name="Butler C.V."/>
            <person name="Ochs M.F."/>
            <person name="Jaenel G."/>
            <person name="King N.W."/>
            <person name="Daniel M.D."/>
            <person name="Desrosiers R.C."/>
        </authorList>
    </citation>
    <scope>NUCLEOTIDE SEQUENCE [GENOMIC DNA]</scope>
</reference>
<organism>
    <name type="scientific">Simian immunodeficiency virus (isolate Mm251)</name>
    <name type="common">SIV-mac</name>
    <name type="synonym">Simian immunodeficiency virus rhesus monkey</name>
    <dbReference type="NCBI Taxonomy" id="11734"/>
    <lineage>
        <taxon>Viruses</taxon>
        <taxon>Riboviria</taxon>
        <taxon>Pararnavirae</taxon>
        <taxon>Artverviricota</taxon>
        <taxon>Revtraviricetes</taxon>
        <taxon>Ortervirales</taxon>
        <taxon>Retroviridae</taxon>
        <taxon>Orthoretrovirinae</taxon>
        <taxon>Lentivirus</taxon>
        <taxon>Simian immunodeficiency virus</taxon>
    </lineage>
</organism>